<evidence type="ECO:0000255" key="1">
    <source>
        <dbReference type="HAMAP-Rule" id="MF_00258"/>
    </source>
</evidence>
<accession>B3GZ94</accession>
<organism>
    <name type="scientific">Actinobacillus pleuropneumoniae serotype 7 (strain AP76)</name>
    <dbReference type="NCBI Taxonomy" id="537457"/>
    <lineage>
        <taxon>Bacteria</taxon>
        <taxon>Pseudomonadati</taxon>
        <taxon>Pseudomonadota</taxon>
        <taxon>Gammaproteobacteria</taxon>
        <taxon>Pasteurellales</taxon>
        <taxon>Pasteurellaceae</taxon>
        <taxon>Actinobacillus</taxon>
    </lineage>
</organism>
<keyword id="KW-0133">Cell shape</keyword>
<keyword id="KW-0961">Cell wall biogenesis/degradation</keyword>
<keyword id="KW-0413">Isomerase</keyword>
<keyword id="KW-0573">Peptidoglycan synthesis</keyword>
<proteinExistence type="inferred from homology"/>
<name>MURI_ACTP7</name>
<dbReference type="EC" id="5.1.1.3" evidence="1"/>
<dbReference type="EMBL" id="CP001091">
    <property type="protein sequence ID" value="ACE62580.1"/>
    <property type="molecule type" value="Genomic_DNA"/>
</dbReference>
<dbReference type="RefSeq" id="WP_005602698.1">
    <property type="nucleotide sequence ID" value="NC_010939.1"/>
</dbReference>
<dbReference type="SMR" id="B3GZ94"/>
<dbReference type="KEGG" id="apa:APP7_1928"/>
<dbReference type="HOGENOM" id="CLU_052344_2_0_6"/>
<dbReference type="UniPathway" id="UPA00219"/>
<dbReference type="Proteomes" id="UP000001226">
    <property type="component" value="Chromosome"/>
</dbReference>
<dbReference type="GO" id="GO:0008881">
    <property type="term" value="F:glutamate racemase activity"/>
    <property type="evidence" value="ECO:0007669"/>
    <property type="project" value="UniProtKB-UniRule"/>
</dbReference>
<dbReference type="GO" id="GO:0071555">
    <property type="term" value="P:cell wall organization"/>
    <property type="evidence" value="ECO:0007669"/>
    <property type="project" value="UniProtKB-KW"/>
</dbReference>
<dbReference type="GO" id="GO:0009252">
    <property type="term" value="P:peptidoglycan biosynthetic process"/>
    <property type="evidence" value="ECO:0007669"/>
    <property type="project" value="UniProtKB-UniRule"/>
</dbReference>
<dbReference type="GO" id="GO:0008360">
    <property type="term" value="P:regulation of cell shape"/>
    <property type="evidence" value="ECO:0007669"/>
    <property type="project" value="UniProtKB-KW"/>
</dbReference>
<dbReference type="FunFam" id="3.40.50.1860:FF:000001">
    <property type="entry name" value="Glutamate racemase"/>
    <property type="match status" value="1"/>
</dbReference>
<dbReference type="Gene3D" id="3.40.50.1860">
    <property type="match status" value="2"/>
</dbReference>
<dbReference type="HAMAP" id="MF_00258">
    <property type="entry name" value="Glu_racemase"/>
    <property type="match status" value="1"/>
</dbReference>
<dbReference type="InterPro" id="IPR015942">
    <property type="entry name" value="Asp/Glu/hydantoin_racemase"/>
</dbReference>
<dbReference type="InterPro" id="IPR001920">
    <property type="entry name" value="Asp/Glu_race"/>
</dbReference>
<dbReference type="InterPro" id="IPR018187">
    <property type="entry name" value="Asp/Glu_racemase_AS_1"/>
</dbReference>
<dbReference type="InterPro" id="IPR033134">
    <property type="entry name" value="Asp/Glu_racemase_AS_2"/>
</dbReference>
<dbReference type="InterPro" id="IPR004391">
    <property type="entry name" value="Glu_race"/>
</dbReference>
<dbReference type="NCBIfam" id="TIGR00067">
    <property type="entry name" value="glut_race"/>
    <property type="match status" value="1"/>
</dbReference>
<dbReference type="PANTHER" id="PTHR21198">
    <property type="entry name" value="GLUTAMATE RACEMASE"/>
    <property type="match status" value="1"/>
</dbReference>
<dbReference type="PANTHER" id="PTHR21198:SF2">
    <property type="entry name" value="GLUTAMATE RACEMASE"/>
    <property type="match status" value="1"/>
</dbReference>
<dbReference type="Pfam" id="PF01177">
    <property type="entry name" value="Asp_Glu_race"/>
    <property type="match status" value="1"/>
</dbReference>
<dbReference type="SUPFAM" id="SSF53681">
    <property type="entry name" value="Aspartate/glutamate racemase"/>
    <property type="match status" value="2"/>
</dbReference>
<dbReference type="PROSITE" id="PS00923">
    <property type="entry name" value="ASP_GLU_RACEMASE_1"/>
    <property type="match status" value="1"/>
</dbReference>
<dbReference type="PROSITE" id="PS00924">
    <property type="entry name" value="ASP_GLU_RACEMASE_2"/>
    <property type="match status" value="1"/>
</dbReference>
<reference key="1">
    <citation type="submission" date="2008-06" db="EMBL/GenBank/DDBJ databases">
        <title>Genome and proteome analysis of A. pleuropneumoniae serotype 7.</title>
        <authorList>
            <person name="Linke B."/>
            <person name="Buettner F."/>
            <person name="Martinez-Arias R."/>
            <person name="Goesmann A."/>
            <person name="Baltes N."/>
            <person name="Tegetmeyer H."/>
            <person name="Singh M."/>
            <person name="Gerlach G.F."/>
        </authorList>
    </citation>
    <scope>NUCLEOTIDE SEQUENCE [LARGE SCALE GENOMIC DNA]</scope>
    <source>
        <strain>AP76</strain>
    </source>
</reference>
<comment type="function">
    <text evidence="1">Provides the (R)-glutamate required for cell wall biosynthesis.</text>
</comment>
<comment type="catalytic activity">
    <reaction evidence="1">
        <text>L-glutamate = D-glutamate</text>
        <dbReference type="Rhea" id="RHEA:12813"/>
        <dbReference type="ChEBI" id="CHEBI:29985"/>
        <dbReference type="ChEBI" id="CHEBI:29986"/>
        <dbReference type="EC" id="5.1.1.3"/>
    </reaction>
</comment>
<comment type="pathway">
    <text evidence="1">Cell wall biogenesis; peptidoglycan biosynthesis.</text>
</comment>
<comment type="similarity">
    <text evidence="1">Belongs to the aspartate/glutamate racemases family.</text>
</comment>
<feature type="chain" id="PRO_1000114030" description="Glutamate racemase">
    <location>
        <begin position="1"/>
        <end position="267"/>
    </location>
</feature>
<feature type="active site" description="Proton donor/acceptor" evidence="1">
    <location>
        <position position="73"/>
    </location>
</feature>
<feature type="active site" description="Proton donor/acceptor" evidence="1">
    <location>
        <position position="184"/>
    </location>
</feature>
<feature type="binding site" evidence="1">
    <location>
        <begin position="9"/>
        <end position="10"/>
    </location>
    <ligand>
        <name>substrate</name>
    </ligand>
</feature>
<feature type="binding site" evidence="1">
    <location>
        <begin position="41"/>
        <end position="42"/>
    </location>
    <ligand>
        <name>substrate</name>
    </ligand>
</feature>
<feature type="binding site" evidence="1">
    <location>
        <begin position="74"/>
        <end position="75"/>
    </location>
    <ligand>
        <name>substrate</name>
    </ligand>
</feature>
<feature type="binding site" evidence="1">
    <location>
        <begin position="185"/>
        <end position="186"/>
    </location>
    <ligand>
        <name>substrate</name>
    </ligand>
</feature>
<protein>
    <recommendedName>
        <fullName evidence="1">Glutamate racemase</fullName>
        <ecNumber evidence="1">5.1.1.3</ecNumber>
    </recommendedName>
</protein>
<gene>
    <name evidence="1" type="primary">murI</name>
    <name type="ordered locus">APP7_1928</name>
</gene>
<sequence length="267" mass="29974">MKPTILLYDSGMGGLTIYDAIRQTLPNAHYLYCFDNAYFPYSERSENVLIEQAVKIVQKIAEKYPLDMVVVACNTASTVVLPALREKFAFPIVGTVPAIKPAAAISQTKTIGLLATKGTVERPYVAELIEKYAKDCIVEKIGTTTLVELVEEKIRTGNVDQDRLSKVVAEWQTHPTLDTVILGCTHFPLVKQELQQLLPKVKFFIDPGNGIANRVATLLSEFSLENSAQNKENIAFCTKMDEEFSKREIIMQQWGFKRLELLNLSQK</sequence>